<proteinExistence type="inferred from homology"/>
<dbReference type="EC" id="2.1.2.1" evidence="1"/>
<dbReference type="EMBL" id="AM946015">
    <property type="protein sequence ID" value="CAR41938.1"/>
    <property type="molecule type" value="Genomic_DNA"/>
</dbReference>
<dbReference type="RefSeq" id="WP_012658376.1">
    <property type="nucleotide sequence ID" value="NC_012004.1"/>
</dbReference>
<dbReference type="SMR" id="B9DS48"/>
<dbReference type="STRING" id="218495.SUB0874"/>
<dbReference type="KEGG" id="sub:SUB0874"/>
<dbReference type="eggNOG" id="COG0112">
    <property type="taxonomic scope" value="Bacteria"/>
</dbReference>
<dbReference type="HOGENOM" id="CLU_022477_2_1_9"/>
<dbReference type="OrthoDB" id="9803846at2"/>
<dbReference type="UniPathway" id="UPA00193"/>
<dbReference type="UniPathway" id="UPA00288">
    <property type="reaction ID" value="UER01023"/>
</dbReference>
<dbReference type="Proteomes" id="UP000000449">
    <property type="component" value="Chromosome"/>
</dbReference>
<dbReference type="GO" id="GO:0005829">
    <property type="term" value="C:cytosol"/>
    <property type="evidence" value="ECO:0007669"/>
    <property type="project" value="TreeGrafter"/>
</dbReference>
<dbReference type="GO" id="GO:0004372">
    <property type="term" value="F:glycine hydroxymethyltransferase activity"/>
    <property type="evidence" value="ECO:0007669"/>
    <property type="project" value="UniProtKB-UniRule"/>
</dbReference>
<dbReference type="GO" id="GO:0030170">
    <property type="term" value="F:pyridoxal phosphate binding"/>
    <property type="evidence" value="ECO:0007669"/>
    <property type="project" value="UniProtKB-UniRule"/>
</dbReference>
<dbReference type="GO" id="GO:0019264">
    <property type="term" value="P:glycine biosynthetic process from serine"/>
    <property type="evidence" value="ECO:0007669"/>
    <property type="project" value="UniProtKB-UniRule"/>
</dbReference>
<dbReference type="GO" id="GO:0035999">
    <property type="term" value="P:tetrahydrofolate interconversion"/>
    <property type="evidence" value="ECO:0007669"/>
    <property type="project" value="UniProtKB-UniRule"/>
</dbReference>
<dbReference type="CDD" id="cd00378">
    <property type="entry name" value="SHMT"/>
    <property type="match status" value="1"/>
</dbReference>
<dbReference type="FunFam" id="3.40.640.10:FF:000001">
    <property type="entry name" value="Serine hydroxymethyltransferase"/>
    <property type="match status" value="1"/>
</dbReference>
<dbReference type="Gene3D" id="3.90.1150.10">
    <property type="entry name" value="Aspartate Aminotransferase, domain 1"/>
    <property type="match status" value="1"/>
</dbReference>
<dbReference type="Gene3D" id="3.40.640.10">
    <property type="entry name" value="Type I PLP-dependent aspartate aminotransferase-like (Major domain)"/>
    <property type="match status" value="1"/>
</dbReference>
<dbReference type="HAMAP" id="MF_00051">
    <property type="entry name" value="SHMT"/>
    <property type="match status" value="1"/>
</dbReference>
<dbReference type="InterPro" id="IPR015424">
    <property type="entry name" value="PyrdxlP-dep_Trfase"/>
</dbReference>
<dbReference type="InterPro" id="IPR015421">
    <property type="entry name" value="PyrdxlP-dep_Trfase_major"/>
</dbReference>
<dbReference type="InterPro" id="IPR015422">
    <property type="entry name" value="PyrdxlP-dep_Trfase_small"/>
</dbReference>
<dbReference type="InterPro" id="IPR001085">
    <property type="entry name" value="Ser_HO-MeTrfase"/>
</dbReference>
<dbReference type="InterPro" id="IPR049943">
    <property type="entry name" value="Ser_HO-MeTrfase-like"/>
</dbReference>
<dbReference type="InterPro" id="IPR019798">
    <property type="entry name" value="Ser_HO-MeTrfase_PLP_BS"/>
</dbReference>
<dbReference type="InterPro" id="IPR039429">
    <property type="entry name" value="SHMT-like_dom"/>
</dbReference>
<dbReference type="NCBIfam" id="NF000586">
    <property type="entry name" value="PRK00011.1"/>
    <property type="match status" value="1"/>
</dbReference>
<dbReference type="PANTHER" id="PTHR11680">
    <property type="entry name" value="SERINE HYDROXYMETHYLTRANSFERASE"/>
    <property type="match status" value="1"/>
</dbReference>
<dbReference type="PANTHER" id="PTHR11680:SF35">
    <property type="entry name" value="SERINE HYDROXYMETHYLTRANSFERASE 1"/>
    <property type="match status" value="1"/>
</dbReference>
<dbReference type="Pfam" id="PF00464">
    <property type="entry name" value="SHMT"/>
    <property type="match status" value="1"/>
</dbReference>
<dbReference type="PIRSF" id="PIRSF000412">
    <property type="entry name" value="SHMT"/>
    <property type="match status" value="1"/>
</dbReference>
<dbReference type="SUPFAM" id="SSF53383">
    <property type="entry name" value="PLP-dependent transferases"/>
    <property type="match status" value="1"/>
</dbReference>
<dbReference type="PROSITE" id="PS00096">
    <property type="entry name" value="SHMT"/>
    <property type="match status" value="1"/>
</dbReference>
<reference key="1">
    <citation type="journal article" date="2009" name="BMC Genomics">
        <title>Evidence for niche adaptation in the genome of the bovine pathogen Streptococcus uberis.</title>
        <authorList>
            <person name="Ward P.N."/>
            <person name="Holden M.T.G."/>
            <person name="Leigh J.A."/>
            <person name="Lennard N."/>
            <person name="Bignell A."/>
            <person name="Barron A."/>
            <person name="Clark L."/>
            <person name="Quail M.A."/>
            <person name="Woodward J."/>
            <person name="Barrell B.G."/>
            <person name="Egan S.A."/>
            <person name="Field T.R."/>
            <person name="Maskell D."/>
            <person name="Kehoe M."/>
            <person name="Dowson C.G."/>
            <person name="Chanter N."/>
            <person name="Whatmore A.M."/>
            <person name="Bentley S.D."/>
            <person name="Parkhill J."/>
        </authorList>
    </citation>
    <scope>NUCLEOTIDE SEQUENCE [LARGE SCALE GENOMIC DNA]</scope>
    <source>
        <strain>ATCC BAA-854 / 0140J</strain>
    </source>
</reference>
<organism>
    <name type="scientific">Streptococcus uberis (strain ATCC BAA-854 / 0140J)</name>
    <dbReference type="NCBI Taxonomy" id="218495"/>
    <lineage>
        <taxon>Bacteria</taxon>
        <taxon>Bacillati</taxon>
        <taxon>Bacillota</taxon>
        <taxon>Bacilli</taxon>
        <taxon>Lactobacillales</taxon>
        <taxon>Streptococcaceae</taxon>
        <taxon>Streptococcus</taxon>
    </lineage>
</organism>
<keyword id="KW-0028">Amino-acid biosynthesis</keyword>
<keyword id="KW-0963">Cytoplasm</keyword>
<keyword id="KW-0554">One-carbon metabolism</keyword>
<keyword id="KW-0663">Pyridoxal phosphate</keyword>
<keyword id="KW-1185">Reference proteome</keyword>
<keyword id="KW-0808">Transferase</keyword>
<evidence type="ECO:0000255" key="1">
    <source>
        <dbReference type="HAMAP-Rule" id="MF_00051"/>
    </source>
</evidence>
<sequence>MIFDKDNFQEYDKELWDAIHAEEERQEHNIELIASENVVSKAVMKAQGTLLTNKYAEGYPGKRYYGGTEWVDVVENLAIERAKTLFGAKFANVQAHSGSQANAAAYMALIESGDTVLGMDLAAGGHLTHGSPVNFSGKTYNFVGYSVDKETEMLDYEAILEQAKEVKPKLIVAGASAYSRIIDFKKFREIADEVGAYLMVDMAHIAGLVATGLHPSPVAYADVTTSTTHKTLRGPRGGLILTNDEGLAKKINSAVFPGLQGGPLEHVIAAKAVSFKEALDPAFTDYAKQVVANTAAMANVFAEDNRFRLISGGTDNHVFLVEVTGVIESGKAAQNLLDEVNITLNKNSIPFETLSPFKTSGIRIGCAAITSRGMGVEESQQIAQLIIKALVNHDNSSILEEVRQEVRTITDRFPLYENL</sequence>
<protein>
    <recommendedName>
        <fullName evidence="1">Serine hydroxymethyltransferase</fullName>
        <shortName evidence="1">SHMT</shortName>
        <shortName evidence="1">Serine methylase</shortName>
        <ecNumber evidence="1">2.1.2.1</ecNumber>
    </recommendedName>
</protein>
<name>GLYA_STRU0</name>
<feature type="chain" id="PRO_1000117652" description="Serine hydroxymethyltransferase">
    <location>
        <begin position="1"/>
        <end position="419"/>
    </location>
</feature>
<feature type="binding site" evidence="1">
    <location>
        <position position="121"/>
    </location>
    <ligand>
        <name>(6S)-5,6,7,8-tetrahydrofolate</name>
        <dbReference type="ChEBI" id="CHEBI:57453"/>
    </ligand>
</feature>
<feature type="binding site" evidence="1">
    <location>
        <begin position="125"/>
        <end position="127"/>
    </location>
    <ligand>
        <name>(6S)-5,6,7,8-tetrahydrofolate</name>
        <dbReference type="ChEBI" id="CHEBI:57453"/>
    </ligand>
</feature>
<feature type="binding site" evidence="1">
    <location>
        <begin position="355"/>
        <end position="357"/>
    </location>
    <ligand>
        <name>(6S)-5,6,7,8-tetrahydrofolate</name>
        <dbReference type="ChEBI" id="CHEBI:57453"/>
    </ligand>
</feature>
<feature type="site" description="Plays an important role in substrate specificity" evidence="1">
    <location>
        <position position="229"/>
    </location>
</feature>
<feature type="modified residue" description="N6-(pyridoxal phosphate)lysine" evidence="1">
    <location>
        <position position="230"/>
    </location>
</feature>
<comment type="function">
    <text evidence="1">Catalyzes the reversible interconversion of serine and glycine with tetrahydrofolate (THF) serving as the one-carbon carrier. This reaction serves as the major source of one-carbon groups required for the biosynthesis of purines, thymidylate, methionine, and other important biomolecules. Also exhibits THF-independent aldolase activity toward beta-hydroxyamino acids, producing glycine and aldehydes, via a retro-aldol mechanism.</text>
</comment>
<comment type="catalytic activity">
    <reaction evidence="1">
        <text>(6R)-5,10-methylene-5,6,7,8-tetrahydrofolate + glycine + H2O = (6S)-5,6,7,8-tetrahydrofolate + L-serine</text>
        <dbReference type="Rhea" id="RHEA:15481"/>
        <dbReference type="ChEBI" id="CHEBI:15377"/>
        <dbReference type="ChEBI" id="CHEBI:15636"/>
        <dbReference type="ChEBI" id="CHEBI:33384"/>
        <dbReference type="ChEBI" id="CHEBI:57305"/>
        <dbReference type="ChEBI" id="CHEBI:57453"/>
        <dbReference type="EC" id="2.1.2.1"/>
    </reaction>
</comment>
<comment type="cofactor">
    <cofactor evidence="1">
        <name>pyridoxal 5'-phosphate</name>
        <dbReference type="ChEBI" id="CHEBI:597326"/>
    </cofactor>
</comment>
<comment type="pathway">
    <text evidence="1">One-carbon metabolism; tetrahydrofolate interconversion.</text>
</comment>
<comment type="pathway">
    <text evidence="1">Amino-acid biosynthesis; glycine biosynthesis; glycine from L-serine: step 1/1.</text>
</comment>
<comment type="subunit">
    <text evidence="1">Homodimer.</text>
</comment>
<comment type="subcellular location">
    <subcellularLocation>
        <location evidence="1">Cytoplasm</location>
    </subcellularLocation>
</comment>
<comment type="similarity">
    <text evidence="1">Belongs to the SHMT family.</text>
</comment>
<accession>B9DS48</accession>
<gene>
    <name evidence="1" type="primary">glyA</name>
    <name type="ordered locus">SUB0874</name>
</gene>